<comment type="function">
    <text evidence="5 6 7 8">V region of the variable domain of immunoglobulin light chains that participates in the antigen recognition (PubMed:24600447). Immunoglobulins, also known as antibodies, are membrane-bound or secreted glycoproteins produced by B lymphocytes. In the recognition phase of humoral immunity, the membrane-bound immunoglobulins serve as receptors which, upon binding of a specific antigen, trigger the clonal expansion and differentiation of B lymphocytes into immunoglobulins-secreting plasma cells. Secreted immunoglobulins mediate the effector phase of humoral immunity, which results in the elimination of bound antigens (PubMed:20176268, PubMed:22158414). The antigen binding site is formed by the variable domain of one heavy chain, together with that of its associated light chain. Thus, each immunoglobulin has two antigen binding sites with remarkable affinity for a particular antigen. The variable domains are assembled by a process called V-(D)-J rearrangement and can then be subjected to somatic hypermutations which, after exposure to antigen and selection, allow affinity maturation for a particular antigen (PubMed:17576170, PubMed:20176268).</text>
</comment>
<comment type="subunit">
    <text evidence="6">Immunoglobulins are composed of two identical heavy chains and two identical light chains; disulfide-linked.</text>
</comment>
<comment type="subcellular location">
    <subcellularLocation>
        <location evidence="6 7">Secreted</location>
    </subcellularLocation>
    <subcellularLocation>
        <location evidence="6 7">Cell membrane</location>
    </subcellularLocation>
</comment>
<comment type="polymorphism">
    <text>There are several alleles. The sequence shown is that of IMGT allele IGLV3-9*01.</text>
</comment>
<comment type="caution">
    <text evidence="10">For an example of a full-length immunoglobulin lambda light chain see AC P0DOX8.</text>
</comment>
<name>LV39_HUMAN</name>
<dbReference type="EMBL" id="AC245028">
    <property type="status" value="NOT_ANNOTATED_CDS"/>
    <property type="molecule type" value="Genomic_DNA"/>
</dbReference>
<dbReference type="EMBL" id="CH471095">
    <property type="protein sequence ID" value="EAW59539.1"/>
    <property type="molecule type" value="Genomic_DNA"/>
</dbReference>
<dbReference type="EMDB" id="EMD-0932"/>
<dbReference type="EMDB" id="EMD-27113"/>
<dbReference type="SMR" id="A0A075B6K5"/>
<dbReference type="FunCoup" id="A0A075B6K5">
    <property type="interactions" value="391"/>
</dbReference>
<dbReference type="BioMuta" id="IGLV3-9"/>
<dbReference type="jPOST" id="A0A075B6K5"/>
<dbReference type="MassIVE" id="A0A075B6K5"/>
<dbReference type="Ensembl" id="ENST00000390316.2">
    <property type="protein sequence ID" value="ENSP00000374851.2"/>
    <property type="gene ID" value="ENSG00000211670.2"/>
</dbReference>
<dbReference type="UCSC" id="uc062cdi.1">
    <property type="organism name" value="human"/>
</dbReference>
<dbReference type="AGR" id="HGNC:5918"/>
<dbReference type="GeneCards" id="IGLV3-9"/>
<dbReference type="HGNC" id="HGNC:5918">
    <property type="gene designation" value="IGLV3-9"/>
</dbReference>
<dbReference type="HPA" id="ENSG00000211670">
    <property type="expression patterns" value="Tissue enhanced (lymphoid tissue, stomach)"/>
</dbReference>
<dbReference type="neXtProt" id="NX_A0A075B6K5"/>
<dbReference type="OpenTargets" id="ENSG00000211670"/>
<dbReference type="VEuPathDB" id="HostDB:ENSG00000211670"/>
<dbReference type="GeneTree" id="ENSGT00940000153120"/>
<dbReference type="HOGENOM" id="CLU_077975_4_0_1"/>
<dbReference type="InParanoid" id="A0A075B6K5"/>
<dbReference type="OMA" id="GRKYVYW"/>
<dbReference type="OrthoDB" id="9531984at2759"/>
<dbReference type="PAN-GO" id="A0A075B6K5">
    <property type="GO annotations" value="3 GO annotations based on evolutionary models"/>
</dbReference>
<dbReference type="PhylomeDB" id="A0A075B6K5"/>
<dbReference type="SignaLink" id="A0A075B6K5"/>
<dbReference type="ChiTaRS" id="IGLV3-9">
    <property type="organism name" value="human"/>
</dbReference>
<dbReference type="Pharos" id="A0A075B6K5">
    <property type="development level" value="Tdark"/>
</dbReference>
<dbReference type="PRO" id="PR:A0A075B6K5"/>
<dbReference type="Proteomes" id="UP000005640">
    <property type="component" value="Chromosome 22"/>
</dbReference>
<dbReference type="RNAct" id="A0A075B6K5">
    <property type="molecule type" value="protein"/>
</dbReference>
<dbReference type="Bgee" id="ENSG00000211670">
    <property type="expression patterns" value="Expressed in lymph node and 83 other cell types or tissues"/>
</dbReference>
<dbReference type="GO" id="GO:0005576">
    <property type="term" value="C:extracellular region"/>
    <property type="evidence" value="ECO:0007669"/>
    <property type="project" value="UniProtKB-SubCell"/>
</dbReference>
<dbReference type="GO" id="GO:0019814">
    <property type="term" value="C:immunoglobulin complex"/>
    <property type="evidence" value="ECO:0000318"/>
    <property type="project" value="GO_Central"/>
</dbReference>
<dbReference type="GO" id="GO:0005886">
    <property type="term" value="C:plasma membrane"/>
    <property type="evidence" value="ECO:0007669"/>
    <property type="project" value="UniProtKB-SubCell"/>
</dbReference>
<dbReference type="GO" id="GO:0002250">
    <property type="term" value="P:adaptive immune response"/>
    <property type="evidence" value="ECO:0007669"/>
    <property type="project" value="UniProtKB-KW"/>
</dbReference>
<dbReference type="GO" id="GO:0006955">
    <property type="term" value="P:immune response"/>
    <property type="evidence" value="ECO:0000318"/>
    <property type="project" value="GO_Central"/>
</dbReference>
<dbReference type="FunFam" id="2.60.40.10:FF:000620">
    <property type="entry name" value="Immunoglobulin lambda locus"/>
    <property type="match status" value="1"/>
</dbReference>
<dbReference type="Gene3D" id="2.60.40.10">
    <property type="entry name" value="Immunoglobulins"/>
    <property type="match status" value="1"/>
</dbReference>
<dbReference type="InterPro" id="IPR007110">
    <property type="entry name" value="Ig-like_dom"/>
</dbReference>
<dbReference type="InterPro" id="IPR036179">
    <property type="entry name" value="Ig-like_dom_sf"/>
</dbReference>
<dbReference type="InterPro" id="IPR013783">
    <property type="entry name" value="Ig-like_fold"/>
</dbReference>
<dbReference type="InterPro" id="IPR003599">
    <property type="entry name" value="Ig_sub"/>
</dbReference>
<dbReference type="InterPro" id="IPR013106">
    <property type="entry name" value="Ig_V-set"/>
</dbReference>
<dbReference type="InterPro" id="IPR050150">
    <property type="entry name" value="IgV_Light_Chain"/>
</dbReference>
<dbReference type="PANTHER" id="PTHR23267">
    <property type="entry name" value="IMMUNOGLOBULIN LIGHT CHAIN"/>
    <property type="match status" value="1"/>
</dbReference>
<dbReference type="Pfam" id="PF07686">
    <property type="entry name" value="V-set"/>
    <property type="match status" value="1"/>
</dbReference>
<dbReference type="SMART" id="SM00409">
    <property type="entry name" value="IG"/>
    <property type="match status" value="1"/>
</dbReference>
<dbReference type="SMART" id="SM00406">
    <property type="entry name" value="IGv"/>
    <property type="match status" value="1"/>
</dbReference>
<dbReference type="SUPFAM" id="SSF48726">
    <property type="entry name" value="Immunoglobulin"/>
    <property type="match status" value="1"/>
</dbReference>
<dbReference type="PROSITE" id="PS50835">
    <property type="entry name" value="IG_LIKE"/>
    <property type="match status" value="1"/>
</dbReference>
<feature type="signal peptide" evidence="2">
    <location>
        <begin position="1"/>
        <end position="20"/>
    </location>
</feature>
<feature type="chain" id="PRO_5010013261" description="Immunoglobulin lambda variable 3-9" evidence="2">
    <location>
        <begin position="21"/>
        <end position="115"/>
    </location>
</feature>
<feature type="domain" description="Ig-like" evidence="3">
    <location>
        <begin position="21"/>
        <end position="115" status="greater than"/>
    </location>
</feature>
<feature type="region of interest" description="Framework-1" evidence="1">
    <location>
        <begin position="20"/>
        <end position="41"/>
    </location>
</feature>
<feature type="region of interest" description="Complementarity-determining-1" evidence="1">
    <location>
        <begin position="42"/>
        <end position="50"/>
    </location>
</feature>
<feature type="region of interest" description="Framework-2" evidence="1">
    <location>
        <begin position="51"/>
        <end position="67"/>
    </location>
</feature>
<feature type="region of interest" description="Complementarity-determining-2" evidence="1">
    <location>
        <begin position="68"/>
        <end position="70"/>
    </location>
</feature>
<feature type="region of interest" description="Framework-3" evidence="1">
    <location>
        <begin position="71"/>
        <end position="106"/>
    </location>
</feature>
<feature type="region of interest" description="Complementarity-determining-3" evidence="1">
    <location>
        <begin position="107"/>
        <end position="115" status="greater than"/>
    </location>
</feature>
<feature type="disulfide bond" evidence="3">
    <location>
        <begin position="41"/>
        <end position="106"/>
    </location>
</feature>
<feature type="non-terminal residue">
    <location>
        <position position="115"/>
    </location>
</feature>
<reference key="1">
    <citation type="journal article" date="1999" name="Nature">
        <title>The DNA sequence of human chromosome 22.</title>
        <authorList>
            <person name="Dunham I."/>
            <person name="Hunt A.R."/>
            <person name="Collins J.E."/>
            <person name="Bruskiewich R."/>
            <person name="Beare D.M."/>
            <person name="Clamp M."/>
            <person name="Smink L.J."/>
            <person name="Ainscough R."/>
            <person name="Almeida J.P."/>
            <person name="Babbage A.K."/>
            <person name="Bagguley C."/>
            <person name="Bailey J."/>
            <person name="Barlow K.F."/>
            <person name="Bates K.N."/>
            <person name="Beasley O.P."/>
            <person name="Bird C.P."/>
            <person name="Blakey S.E."/>
            <person name="Bridgeman A.M."/>
            <person name="Buck D."/>
            <person name="Burgess J."/>
            <person name="Burrill W.D."/>
            <person name="Burton J."/>
            <person name="Carder C."/>
            <person name="Carter N.P."/>
            <person name="Chen Y."/>
            <person name="Clark G."/>
            <person name="Clegg S.M."/>
            <person name="Cobley V.E."/>
            <person name="Cole C.G."/>
            <person name="Collier R.E."/>
            <person name="Connor R."/>
            <person name="Conroy D."/>
            <person name="Corby N.R."/>
            <person name="Coville G.J."/>
            <person name="Cox A.V."/>
            <person name="Davis J."/>
            <person name="Dawson E."/>
            <person name="Dhami P.D."/>
            <person name="Dockree C."/>
            <person name="Dodsworth S.J."/>
            <person name="Durbin R.M."/>
            <person name="Ellington A.G."/>
            <person name="Evans K.L."/>
            <person name="Fey J.M."/>
            <person name="Fleming K."/>
            <person name="French L."/>
            <person name="Garner A.A."/>
            <person name="Gilbert J.G.R."/>
            <person name="Goward M.E."/>
            <person name="Grafham D.V."/>
            <person name="Griffiths M.N.D."/>
            <person name="Hall C."/>
            <person name="Hall R.E."/>
            <person name="Hall-Tamlyn G."/>
            <person name="Heathcott R.W."/>
            <person name="Ho S."/>
            <person name="Holmes S."/>
            <person name="Hunt S.E."/>
            <person name="Jones M.C."/>
            <person name="Kershaw J."/>
            <person name="Kimberley A.M."/>
            <person name="King A."/>
            <person name="Laird G.K."/>
            <person name="Langford C.F."/>
            <person name="Leversha M.A."/>
            <person name="Lloyd C."/>
            <person name="Lloyd D.M."/>
            <person name="Martyn I.D."/>
            <person name="Mashreghi-Mohammadi M."/>
            <person name="Matthews L.H."/>
            <person name="Mccann O.T."/>
            <person name="Mcclay J."/>
            <person name="Mclaren S."/>
            <person name="McMurray A.A."/>
            <person name="Milne S.A."/>
            <person name="Mortimore B.J."/>
            <person name="Odell C.N."/>
            <person name="Pavitt R."/>
            <person name="Pearce A.V."/>
            <person name="Pearson D."/>
            <person name="Phillimore B.J.C.T."/>
            <person name="Phillips S.H."/>
            <person name="Plumb R.W."/>
            <person name="Ramsay H."/>
            <person name="Ramsey Y."/>
            <person name="Rogers L."/>
            <person name="Ross M.T."/>
            <person name="Scott C.E."/>
            <person name="Sehra H.K."/>
            <person name="Skuce C.D."/>
            <person name="Smalley S."/>
            <person name="Smith M.L."/>
            <person name="Soderlund C."/>
            <person name="Spragon L."/>
            <person name="Steward C.A."/>
            <person name="Sulston J.E."/>
            <person name="Swann R.M."/>
            <person name="Vaudin M."/>
            <person name="Wall M."/>
            <person name="Wallis J.M."/>
            <person name="Whiteley M.N."/>
            <person name="Willey D.L."/>
            <person name="Williams L."/>
            <person name="Williams S.A."/>
            <person name="Williamson H."/>
            <person name="Wilmer T.E."/>
            <person name="Wilming L."/>
            <person name="Wright C.L."/>
            <person name="Hubbard T."/>
            <person name="Bentley D.R."/>
            <person name="Beck S."/>
            <person name="Rogers J."/>
            <person name="Shimizu N."/>
            <person name="Minoshima S."/>
            <person name="Kawasaki K."/>
            <person name="Sasaki T."/>
            <person name="Asakawa S."/>
            <person name="Kudoh J."/>
            <person name="Shintani A."/>
            <person name="Shibuya K."/>
            <person name="Yoshizaki Y."/>
            <person name="Aoki N."/>
            <person name="Mitsuyama S."/>
            <person name="Roe B.A."/>
            <person name="Chen F."/>
            <person name="Chu L."/>
            <person name="Crabtree J."/>
            <person name="Deschamps S."/>
            <person name="Do A."/>
            <person name="Do T."/>
            <person name="Dorman A."/>
            <person name="Fang F."/>
            <person name="Fu Y."/>
            <person name="Hu P."/>
            <person name="Hua A."/>
            <person name="Kenton S."/>
            <person name="Lai H."/>
            <person name="Lao H.I."/>
            <person name="Lewis J."/>
            <person name="Lewis S."/>
            <person name="Lin S.-P."/>
            <person name="Loh P."/>
            <person name="Malaj E."/>
            <person name="Nguyen T."/>
            <person name="Pan H."/>
            <person name="Phan S."/>
            <person name="Qi S."/>
            <person name="Qian Y."/>
            <person name="Ray L."/>
            <person name="Ren Q."/>
            <person name="Shaull S."/>
            <person name="Sloan D."/>
            <person name="Song L."/>
            <person name="Wang Q."/>
            <person name="Wang Y."/>
            <person name="Wang Z."/>
            <person name="White J."/>
            <person name="Willingham D."/>
            <person name="Wu H."/>
            <person name="Yao Z."/>
            <person name="Zhan M."/>
            <person name="Zhang G."/>
            <person name="Chissoe S."/>
            <person name="Murray J."/>
            <person name="Miller N."/>
            <person name="Minx P."/>
            <person name="Fulton R."/>
            <person name="Johnson D."/>
            <person name="Bemis G."/>
            <person name="Bentley D."/>
            <person name="Bradshaw H."/>
            <person name="Bourne S."/>
            <person name="Cordes M."/>
            <person name="Du Z."/>
            <person name="Fulton L."/>
            <person name="Goela D."/>
            <person name="Graves T."/>
            <person name="Hawkins J."/>
            <person name="Hinds K."/>
            <person name="Kemp K."/>
            <person name="Latreille P."/>
            <person name="Layman D."/>
            <person name="Ozersky P."/>
            <person name="Rohlfing T."/>
            <person name="Scheet P."/>
            <person name="Walker C."/>
            <person name="Wamsley A."/>
            <person name="Wohldmann P."/>
            <person name="Pepin K."/>
            <person name="Nelson J."/>
            <person name="Korf I."/>
            <person name="Bedell J.A."/>
            <person name="Hillier L.W."/>
            <person name="Mardis E."/>
            <person name="Waterston R."/>
            <person name="Wilson R."/>
            <person name="Emanuel B.S."/>
            <person name="Shaikh T."/>
            <person name="Kurahashi H."/>
            <person name="Saitta S."/>
            <person name="Budarf M.L."/>
            <person name="McDermid H.E."/>
            <person name="Johnson A."/>
            <person name="Wong A.C.C."/>
            <person name="Morrow B.E."/>
            <person name="Edelmann L."/>
            <person name="Kim U.J."/>
            <person name="Shizuya H."/>
            <person name="Simon M.I."/>
            <person name="Dumanski J.P."/>
            <person name="Peyrard M."/>
            <person name="Kedra D."/>
            <person name="Seroussi E."/>
            <person name="Fransson I."/>
            <person name="Tapia I."/>
            <person name="Bruder C.E."/>
            <person name="O'Brien K.P."/>
            <person name="Wilkinson P."/>
            <person name="Bodenteich A."/>
            <person name="Hartman K."/>
            <person name="Hu X."/>
            <person name="Khan A.S."/>
            <person name="Lane L."/>
            <person name="Tilahun Y."/>
            <person name="Wright H."/>
        </authorList>
    </citation>
    <scope>NUCLEOTIDE SEQUENCE [LARGE SCALE GENOMIC DNA] (IMGT ALLELE IGLV3-9*01)</scope>
</reference>
<reference key="2">
    <citation type="journal article" date="2001" name="Exp. Clin. Immunogenet.">
        <title>Nomenclature of the human immunoglobulin lambda (IGL) genes.</title>
        <authorList>
            <person name="Lefranc M.P."/>
        </authorList>
    </citation>
    <scope>NOMENCLATURE</scope>
</reference>
<reference key="3">
    <citation type="book" date="2001" name="The Immunoglobulin FactsBook.">
        <title>The Immunoglobulin FactsBook.</title>
        <editorList>
            <person name="Lefranc M.P."/>
            <person name="Lefranc G."/>
        </editorList>
        <authorList>
            <person name="Lefranc M.P."/>
            <person name="Lefranc G."/>
        </authorList>
    </citation>
    <scope>NOMENCLATURE</scope>
</reference>
<reference key="4">
    <citation type="journal article" date="2007" name="Annu. Rev. Genet.">
        <title>Immunoglobulin somatic hypermutation.</title>
        <authorList>
            <person name="Teng G."/>
            <person name="Papavasiliou F.N."/>
        </authorList>
    </citation>
    <scope>REVIEW ON SOMATIC HYPERMUTATION</scope>
</reference>
<reference key="5">
    <citation type="journal article" date="2010" name="J. Allergy Clin. Immunol.">
        <title>Structure and function of immunoglobulins.</title>
        <authorList>
            <person name="Schroeder H.W. Jr."/>
            <person name="Cavacini L."/>
        </authorList>
    </citation>
    <scope>REVIEW ON IMMUNOGLOBULINS</scope>
</reference>
<reference key="6">
    <citation type="journal article" date="2012" name="Nat. Rev. Immunol.">
        <title>Molecular programming of B cell memory.</title>
        <authorList>
            <person name="McHeyzer-Williams M."/>
            <person name="Okitsu S."/>
            <person name="Wang N."/>
            <person name="McHeyzer-Williams L."/>
        </authorList>
    </citation>
    <scope>REVIEW ON FUNCTION</scope>
</reference>
<reference key="7">
    <citation type="journal article" date="2014" name="Front. Immunol.">
        <title>Immunoglobulin and T Cell Receptor Genes: IMGT((R)) and the Birth and Rise of Immunoinformatics.</title>
        <authorList>
            <person name="Lefranc M.P."/>
        </authorList>
    </citation>
    <scope>NOMENCLATURE</scope>
</reference>
<sequence length="115" mass="12332">MAWTALLLSLLAHFTGSVASYELTQPLSVSVALGQTARITCGGNNIGSKNVHWYQQKPGQAPVLVIYRDSNRPSGIPERFSGSNSGNTATLTISRAQAGDEADYYCQVWDSSTAH</sequence>
<proteinExistence type="evidence at protein level"/>
<evidence type="ECO:0000250" key="1">
    <source>
        <dbReference type="UniProtKB" id="P01721"/>
    </source>
</evidence>
<evidence type="ECO:0000255" key="2"/>
<evidence type="ECO:0000255" key="3">
    <source>
        <dbReference type="PROSITE-ProRule" id="PRU00114"/>
    </source>
</evidence>
<evidence type="ECO:0000303" key="4">
    <source>
    </source>
</evidence>
<evidence type="ECO:0000303" key="5">
    <source>
    </source>
</evidence>
<evidence type="ECO:0000303" key="6">
    <source>
    </source>
</evidence>
<evidence type="ECO:0000303" key="7">
    <source>
    </source>
</evidence>
<evidence type="ECO:0000303" key="8">
    <source>
    </source>
</evidence>
<evidence type="ECO:0000303" key="9">
    <source ref="3"/>
</evidence>
<evidence type="ECO:0000305" key="10"/>
<organism>
    <name type="scientific">Homo sapiens</name>
    <name type="common">Human</name>
    <dbReference type="NCBI Taxonomy" id="9606"/>
    <lineage>
        <taxon>Eukaryota</taxon>
        <taxon>Metazoa</taxon>
        <taxon>Chordata</taxon>
        <taxon>Craniata</taxon>
        <taxon>Vertebrata</taxon>
        <taxon>Euteleostomi</taxon>
        <taxon>Mammalia</taxon>
        <taxon>Eutheria</taxon>
        <taxon>Euarchontoglires</taxon>
        <taxon>Primates</taxon>
        <taxon>Haplorrhini</taxon>
        <taxon>Catarrhini</taxon>
        <taxon>Hominidae</taxon>
        <taxon>Homo</taxon>
    </lineage>
</organism>
<protein>
    <recommendedName>
        <fullName evidence="4 9">Immunoglobulin lambda variable 3-9</fullName>
    </recommendedName>
</protein>
<accession>A0A075B6K5</accession>
<keyword id="KW-1064">Adaptive immunity</keyword>
<keyword id="KW-1003">Cell membrane</keyword>
<keyword id="KW-1015">Disulfide bond</keyword>
<keyword id="KW-0391">Immunity</keyword>
<keyword id="KW-1280">Immunoglobulin</keyword>
<keyword id="KW-0393">Immunoglobulin domain</keyword>
<keyword id="KW-0472">Membrane</keyword>
<keyword id="KW-1267">Proteomics identification</keyword>
<keyword id="KW-1185">Reference proteome</keyword>
<keyword id="KW-0964">Secreted</keyword>
<keyword id="KW-0732">Signal</keyword>
<gene>
    <name evidence="4 9" type="primary">IGLV3-9</name>
</gene>